<organism>
    <name type="scientific">Exiguobacterium sp. (strain ATCC BAA-1283 / AT1b)</name>
    <dbReference type="NCBI Taxonomy" id="360911"/>
    <lineage>
        <taxon>Bacteria</taxon>
        <taxon>Bacillati</taxon>
        <taxon>Bacillota</taxon>
        <taxon>Bacilli</taxon>
        <taxon>Bacillales</taxon>
        <taxon>Bacillales Family XII. Incertae Sedis</taxon>
        <taxon>Exiguobacterium</taxon>
    </lineage>
</organism>
<proteinExistence type="inferred from homology"/>
<dbReference type="EC" id="3.1.1.29" evidence="1"/>
<dbReference type="EMBL" id="CP001615">
    <property type="protein sequence ID" value="ACQ70612.1"/>
    <property type="molecule type" value="Genomic_DNA"/>
</dbReference>
<dbReference type="RefSeq" id="WP_012727730.1">
    <property type="nucleotide sequence ID" value="NC_012673.1"/>
</dbReference>
<dbReference type="SMR" id="C4KZU9"/>
<dbReference type="STRING" id="360911.EAT1b_1686"/>
<dbReference type="GeneID" id="94370685"/>
<dbReference type="KEGG" id="eat:EAT1b_1686"/>
<dbReference type="eggNOG" id="COG0193">
    <property type="taxonomic scope" value="Bacteria"/>
</dbReference>
<dbReference type="HOGENOM" id="CLU_062456_4_1_9"/>
<dbReference type="OrthoDB" id="9800507at2"/>
<dbReference type="Proteomes" id="UP000000716">
    <property type="component" value="Chromosome"/>
</dbReference>
<dbReference type="GO" id="GO:0005737">
    <property type="term" value="C:cytoplasm"/>
    <property type="evidence" value="ECO:0007669"/>
    <property type="project" value="UniProtKB-SubCell"/>
</dbReference>
<dbReference type="GO" id="GO:0004045">
    <property type="term" value="F:peptidyl-tRNA hydrolase activity"/>
    <property type="evidence" value="ECO:0007669"/>
    <property type="project" value="UniProtKB-UniRule"/>
</dbReference>
<dbReference type="GO" id="GO:0000049">
    <property type="term" value="F:tRNA binding"/>
    <property type="evidence" value="ECO:0007669"/>
    <property type="project" value="UniProtKB-UniRule"/>
</dbReference>
<dbReference type="GO" id="GO:0006515">
    <property type="term" value="P:protein quality control for misfolded or incompletely synthesized proteins"/>
    <property type="evidence" value="ECO:0007669"/>
    <property type="project" value="UniProtKB-UniRule"/>
</dbReference>
<dbReference type="GO" id="GO:0072344">
    <property type="term" value="P:rescue of stalled ribosome"/>
    <property type="evidence" value="ECO:0007669"/>
    <property type="project" value="UniProtKB-UniRule"/>
</dbReference>
<dbReference type="CDD" id="cd00462">
    <property type="entry name" value="PTH"/>
    <property type="match status" value="1"/>
</dbReference>
<dbReference type="FunFam" id="3.40.50.1470:FF:000001">
    <property type="entry name" value="Peptidyl-tRNA hydrolase"/>
    <property type="match status" value="1"/>
</dbReference>
<dbReference type="Gene3D" id="3.40.50.1470">
    <property type="entry name" value="Peptidyl-tRNA hydrolase"/>
    <property type="match status" value="1"/>
</dbReference>
<dbReference type="HAMAP" id="MF_00083">
    <property type="entry name" value="Pept_tRNA_hydro_bact"/>
    <property type="match status" value="1"/>
</dbReference>
<dbReference type="InterPro" id="IPR001328">
    <property type="entry name" value="Pept_tRNA_hydro"/>
</dbReference>
<dbReference type="InterPro" id="IPR018171">
    <property type="entry name" value="Pept_tRNA_hydro_CS"/>
</dbReference>
<dbReference type="InterPro" id="IPR036416">
    <property type="entry name" value="Pept_tRNA_hydro_sf"/>
</dbReference>
<dbReference type="NCBIfam" id="TIGR00447">
    <property type="entry name" value="pth"/>
    <property type="match status" value="1"/>
</dbReference>
<dbReference type="PANTHER" id="PTHR17224">
    <property type="entry name" value="PEPTIDYL-TRNA HYDROLASE"/>
    <property type="match status" value="1"/>
</dbReference>
<dbReference type="PANTHER" id="PTHR17224:SF1">
    <property type="entry name" value="PEPTIDYL-TRNA HYDROLASE"/>
    <property type="match status" value="1"/>
</dbReference>
<dbReference type="Pfam" id="PF01195">
    <property type="entry name" value="Pept_tRNA_hydro"/>
    <property type="match status" value="1"/>
</dbReference>
<dbReference type="SUPFAM" id="SSF53178">
    <property type="entry name" value="Peptidyl-tRNA hydrolase-like"/>
    <property type="match status" value="1"/>
</dbReference>
<dbReference type="PROSITE" id="PS01195">
    <property type="entry name" value="PEPT_TRNA_HYDROL_1"/>
    <property type="match status" value="1"/>
</dbReference>
<dbReference type="PROSITE" id="PS01196">
    <property type="entry name" value="PEPT_TRNA_HYDROL_2"/>
    <property type="match status" value="1"/>
</dbReference>
<sequence>MKCIVGLGNPGKKFEMTRHNVGFLAIDRLAEKHGISLNEAKFNALMGTGRINGERVVLVKPLTYMNLSGEAVRPILDYYKIEIDDLLVIYDDLDMVPGKLRFRPKGSAGGHNGIKSLIQHLGTAEFKRLKLGIGRPPHPIKVVDWVLMNYRKDELPELNETLDNAVTAATDFVDTDWLALMNRYN</sequence>
<reference key="1">
    <citation type="journal article" date="2011" name="J. Bacteriol.">
        <title>Complete genome sequence of the Thermophilic Bacterium Exiguobacterium sp. AT1b.</title>
        <authorList>
            <person name="Vishnivetskaya T.A."/>
            <person name="Lucas S."/>
            <person name="Copeland A."/>
            <person name="Lapidus A."/>
            <person name="Glavina del Rio T."/>
            <person name="Dalin E."/>
            <person name="Tice H."/>
            <person name="Bruce D.C."/>
            <person name="Goodwin L.A."/>
            <person name="Pitluck S."/>
            <person name="Saunders E."/>
            <person name="Brettin T."/>
            <person name="Detter C."/>
            <person name="Han C."/>
            <person name="Larimer F."/>
            <person name="Land M.L."/>
            <person name="Hauser L.J."/>
            <person name="Kyrpides N.C."/>
            <person name="Ovchinnikova G."/>
            <person name="Kathariou S."/>
            <person name="Ramaley R.F."/>
            <person name="Rodrigues D.F."/>
            <person name="Hendrix C."/>
            <person name="Richardson P."/>
            <person name="Tiedje J.M."/>
        </authorList>
    </citation>
    <scope>NUCLEOTIDE SEQUENCE [LARGE SCALE GENOMIC DNA]</scope>
    <source>
        <strain>ATCC BAA-1283 / AT1b</strain>
    </source>
</reference>
<name>PTH_EXISA</name>
<evidence type="ECO:0000255" key="1">
    <source>
        <dbReference type="HAMAP-Rule" id="MF_00083"/>
    </source>
</evidence>
<gene>
    <name evidence="1" type="primary">pth</name>
    <name type="ordered locus">EAT1b_1686</name>
</gene>
<comment type="function">
    <text evidence="1">Hydrolyzes ribosome-free peptidyl-tRNAs (with 1 or more amino acids incorporated), which drop off the ribosome during protein synthesis, or as a result of ribosome stalling.</text>
</comment>
<comment type="function">
    <text evidence="1">Catalyzes the release of premature peptidyl moieties from peptidyl-tRNA molecules trapped in stalled 50S ribosomal subunits, and thus maintains levels of free tRNAs and 50S ribosomes.</text>
</comment>
<comment type="catalytic activity">
    <reaction evidence="1">
        <text>an N-acyl-L-alpha-aminoacyl-tRNA + H2O = an N-acyl-L-amino acid + a tRNA + H(+)</text>
        <dbReference type="Rhea" id="RHEA:54448"/>
        <dbReference type="Rhea" id="RHEA-COMP:10123"/>
        <dbReference type="Rhea" id="RHEA-COMP:13883"/>
        <dbReference type="ChEBI" id="CHEBI:15377"/>
        <dbReference type="ChEBI" id="CHEBI:15378"/>
        <dbReference type="ChEBI" id="CHEBI:59874"/>
        <dbReference type="ChEBI" id="CHEBI:78442"/>
        <dbReference type="ChEBI" id="CHEBI:138191"/>
        <dbReference type="EC" id="3.1.1.29"/>
    </reaction>
</comment>
<comment type="subunit">
    <text evidence="1">Monomer.</text>
</comment>
<comment type="subcellular location">
    <subcellularLocation>
        <location evidence="1">Cytoplasm</location>
    </subcellularLocation>
</comment>
<comment type="similarity">
    <text evidence="1">Belongs to the PTH family.</text>
</comment>
<keyword id="KW-0963">Cytoplasm</keyword>
<keyword id="KW-0378">Hydrolase</keyword>
<keyword id="KW-0694">RNA-binding</keyword>
<keyword id="KW-0820">tRNA-binding</keyword>
<accession>C4KZU9</accession>
<feature type="chain" id="PRO_1000202584" description="Peptidyl-tRNA hydrolase">
    <location>
        <begin position="1"/>
        <end position="185"/>
    </location>
</feature>
<feature type="active site" description="Proton acceptor" evidence="1">
    <location>
        <position position="19"/>
    </location>
</feature>
<feature type="binding site" evidence="1">
    <location>
        <position position="14"/>
    </location>
    <ligand>
        <name>tRNA</name>
        <dbReference type="ChEBI" id="CHEBI:17843"/>
    </ligand>
</feature>
<feature type="binding site" evidence="1">
    <location>
        <position position="64"/>
    </location>
    <ligand>
        <name>tRNA</name>
        <dbReference type="ChEBI" id="CHEBI:17843"/>
    </ligand>
</feature>
<feature type="binding site" evidence="1">
    <location>
        <position position="66"/>
    </location>
    <ligand>
        <name>tRNA</name>
        <dbReference type="ChEBI" id="CHEBI:17843"/>
    </ligand>
</feature>
<feature type="binding site" evidence="1">
    <location>
        <position position="112"/>
    </location>
    <ligand>
        <name>tRNA</name>
        <dbReference type="ChEBI" id="CHEBI:17843"/>
    </ligand>
</feature>
<feature type="site" description="Discriminates between blocked and unblocked aminoacyl-tRNA" evidence="1">
    <location>
        <position position="9"/>
    </location>
</feature>
<feature type="site" description="Stabilizes the basic form of H active site to accept a proton" evidence="1">
    <location>
        <position position="91"/>
    </location>
</feature>
<protein>
    <recommendedName>
        <fullName evidence="1">Peptidyl-tRNA hydrolase</fullName>
        <shortName evidence="1">Pth</shortName>
        <ecNumber evidence="1">3.1.1.29</ecNumber>
    </recommendedName>
</protein>